<reference key="1">
    <citation type="journal article" date="2008" name="DNA Res.">
        <title>Complete genome sequence and comparative analysis of the wild-type commensal Escherichia coli strain SE11 isolated from a healthy adult.</title>
        <authorList>
            <person name="Oshima K."/>
            <person name="Toh H."/>
            <person name="Ogura Y."/>
            <person name="Sasamoto H."/>
            <person name="Morita H."/>
            <person name="Park S.-H."/>
            <person name="Ooka T."/>
            <person name="Iyoda S."/>
            <person name="Taylor T.D."/>
            <person name="Hayashi T."/>
            <person name="Itoh K."/>
            <person name="Hattori M."/>
        </authorList>
    </citation>
    <scope>NUCLEOTIDE SEQUENCE [LARGE SCALE GENOMIC DNA]</scope>
    <source>
        <strain>SE11</strain>
    </source>
</reference>
<dbReference type="EMBL" id="AP009240">
    <property type="protein sequence ID" value="BAG79991.1"/>
    <property type="molecule type" value="Genomic_DNA"/>
</dbReference>
<dbReference type="RefSeq" id="WP_001122507.1">
    <property type="nucleotide sequence ID" value="NC_011415.1"/>
</dbReference>
<dbReference type="SMR" id="B6I274"/>
<dbReference type="GeneID" id="75202404"/>
<dbReference type="KEGG" id="ecy:ECSE_4467"/>
<dbReference type="HOGENOM" id="CLU_004131_5_1_6"/>
<dbReference type="Proteomes" id="UP000008199">
    <property type="component" value="Chromosome"/>
</dbReference>
<dbReference type="GO" id="GO:0032300">
    <property type="term" value="C:mismatch repair complex"/>
    <property type="evidence" value="ECO:0007669"/>
    <property type="project" value="InterPro"/>
</dbReference>
<dbReference type="GO" id="GO:0005524">
    <property type="term" value="F:ATP binding"/>
    <property type="evidence" value="ECO:0007669"/>
    <property type="project" value="InterPro"/>
</dbReference>
<dbReference type="GO" id="GO:0016887">
    <property type="term" value="F:ATP hydrolysis activity"/>
    <property type="evidence" value="ECO:0007669"/>
    <property type="project" value="InterPro"/>
</dbReference>
<dbReference type="GO" id="GO:0140664">
    <property type="term" value="F:ATP-dependent DNA damage sensor activity"/>
    <property type="evidence" value="ECO:0007669"/>
    <property type="project" value="InterPro"/>
</dbReference>
<dbReference type="GO" id="GO:0030983">
    <property type="term" value="F:mismatched DNA binding"/>
    <property type="evidence" value="ECO:0007669"/>
    <property type="project" value="InterPro"/>
</dbReference>
<dbReference type="GO" id="GO:0006298">
    <property type="term" value="P:mismatch repair"/>
    <property type="evidence" value="ECO:0007669"/>
    <property type="project" value="UniProtKB-UniRule"/>
</dbReference>
<dbReference type="CDD" id="cd16926">
    <property type="entry name" value="HATPase_MutL-MLH-PMS-like"/>
    <property type="match status" value="1"/>
</dbReference>
<dbReference type="CDD" id="cd03482">
    <property type="entry name" value="MutL_Trans_MutL"/>
    <property type="match status" value="1"/>
</dbReference>
<dbReference type="FunFam" id="3.30.230.10:FF:000013">
    <property type="entry name" value="DNA mismatch repair endonuclease MutL"/>
    <property type="match status" value="1"/>
</dbReference>
<dbReference type="FunFam" id="3.30.565.10:FF:000003">
    <property type="entry name" value="DNA mismatch repair endonuclease MutL"/>
    <property type="match status" value="1"/>
</dbReference>
<dbReference type="FunFam" id="3.30.1370.100:FF:000002">
    <property type="entry name" value="DNA mismatch repair protein MutL"/>
    <property type="match status" value="1"/>
</dbReference>
<dbReference type="Gene3D" id="3.30.230.10">
    <property type="match status" value="1"/>
</dbReference>
<dbReference type="Gene3D" id="3.30.565.10">
    <property type="entry name" value="Histidine kinase-like ATPase, C-terminal domain"/>
    <property type="match status" value="1"/>
</dbReference>
<dbReference type="Gene3D" id="3.30.1540.20">
    <property type="entry name" value="MutL, C-terminal domain, dimerisation subdomain"/>
    <property type="match status" value="1"/>
</dbReference>
<dbReference type="Gene3D" id="3.30.1370.100">
    <property type="entry name" value="MutL, C-terminal domain, regulatory subdomain"/>
    <property type="match status" value="1"/>
</dbReference>
<dbReference type="HAMAP" id="MF_00149">
    <property type="entry name" value="DNA_mis_repair"/>
    <property type="match status" value="1"/>
</dbReference>
<dbReference type="InterPro" id="IPR014762">
    <property type="entry name" value="DNA_mismatch_repair_CS"/>
</dbReference>
<dbReference type="InterPro" id="IPR020667">
    <property type="entry name" value="DNA_mismatch_repair_MutL"/>
</dbReference>
<dbReference type="InterPro" id="IPR013507">
    <property type="entry name" value="DNA_mismatch_S5_2-like"/>
</dbReference>
<dbReference type="InterPro" id="IPR036890">
    <property type="entry name" value="HATPase_C_sf"/>
</dbReference>
<dbReference type="InterPro" id="IPR002099">
    <property type="entry name" value="MutL/Mlh/PMS"/>
</dbReference>
<dbReference type="InterPro" id="IPR038973">
    <property type="entry name" value="MutL/Mlh/Pms-like"/>
</dbReference>
<dbReference type="InterPro" id="IPR014790">
    <property type="entry name" value="MutL_C"/>
</dbReference>
<dbReference type="InterPro" id="IPR042120">
    <property type="entry name" value="MutL_C_dimsub"/>
</dbReference>
<dbReference type="InterPro" id="IPR042121">
    <property type="entry name" value="MutL_C_regsub"/>
</dbReference>
<dbReference type="InterPro" id="IPR037198">
    <property type="entry name" value="MutL_C_sf"/>
</dbReference>
<dbReference type="InterPro" id="IPR020568">
    <property type="entry name" value="Ribosomal_Su5_D2-typ_SF"/>
</dbReference>
<dbReference type="InterPro" id="IPR014721">
    <property type="entry name" value="Ribsml_uS5_D2-typ_fold_subgr"/>
</dbReference>
<dbReference type="NCBIfam" id="TIGR00585">
    <property type="entry name" value="mutl"/>
    <property type="match status" value="1"/>
</dbReference>
<dbReference type="NCBIfam" id="NF000948">
    <property type="entry name" value="PRK00095.1-1"/>
    <property type="match status" value="1"/>
</dbReference>
<dbReference type="PANTHER" id="PTHR10073">
    <property type="entry name" value="DNA MISMATCH REPAIR PROTEIN MLH, PMS, MUTL"/>
    <property type="match status" value="1"/>
</dbReference>
<dbReference type="PANTHER" id="PTHR10073:SF12">
    <property type="entry name" value="DNA MISMATCH REPAIR PROTEIN MLH1"/>
    <property type="match status" value="1"/>
</dbReference>
<dbReference type="Pfam" id="PF01119">
    <property type="entry name" value="DNA_mis_repair"/>
    <property type="match status" value="1"/>
</dbReference>
<dbReference type="Pfam" id="PF13589">
    <property type="entry name" value="HATPase_c_3"/>
    <property type="match status" value="1"/>
</dbReference>
<dbReference type="Pfam" id="PF08676">
    <property type="entry name" value="MutL_C"/>
    <property type="match status" value="1"/>
</dbReference>
<dbReference type="SMART" id="SM01340">
    <property type="entry name" value="DNA_mis_repair"/>
    <property type="match status" value="1"/>
</dbReference>
<dbReference type="SMART" id="SM00853">
    <property type="entry name" value="MutL_C"/>
    <property type="match status" value="1"/>
</dbReference>
<dbReference type="SUPFAM" id="SSF55874">
    <property type="entry name" value="ATPase domain of HSP90 chaperone/DNA topoisomerase II/histidine kinase"/>
    <property type="match status" value="1"/>
</dbReference>
<dbReference type="SUPFAM" id="SSF118116">
    <property type="entry name" value="DNA mismatch repair protein MutL"/>
    <property type="match status" value="1"/>
</dbReference>
<dbReference type="SUPFAM" id="SSF54211">
    <property type="entry name" value="Ribosomal protein S5 domain 2-like"/>
    <property type="match status" value="1"/>
</dbReference>
<dbReference type="PROSITE" id="PS00058">
    <property type="entry name" value="DNA_MISMATCH_REPAIR_1"/>
    <property type="match status" value="1"/>
</dbReference>
<evidence type="ECO:0000255" key="1">
    <source>
        <dbReference type="HAMAP-Rule" id="MF_00149"/>
    </source>
</evidence>
<evidence type="ECO:0000256" key="2">
    <source>
        <dbReference type="SAM" id="MobiDB-lite"/>
    </source>
</evidence>
<proteinExistence type="inferred from homology"/>
<sequence length="615" mass="67908">MPIQVLPPQLANQIAAGEVVERPASVVKELVENSLDAGATRIDIDIERGGAKLIRIRDNGCGIKKDELALALARHATSKIASLDDLEAIISLGFRGEALASISSVSRLTLTSRTAEQQEAWQAYAEGRDMNVTVKPAAHPVGTTLEVLDLFYNTPARRKFLRTEKTEFNHIDEIIRRIALARFDVTINLSHNGKIVRQYRAVPEGGQKERRLGAICGTAFLEQALAIEWQHGDLTLRGWVADPNHTTPALAEIQYCYVNGRMMRDRLINHAIRQACEDKLGADQQPAFVLYLEIDPHQVDVNVHPAKHEVRFHQSRLVHDFIYQGVLSVLQQQLETPLPLDDEPQPAPRSIPENRVAAGRNHFAEPAAREPVAPRYTPAPASGSRPAAPWPNAQPGYQKQQGEVYRQLLQTPAPMQKPKAPEPQEPALAANSQSFGRVLTIVHSDCALLERDGNISLLSLPVAERWLRQAQLTPGEAPVCAQPLLIPLRLKVSAEEKSALEKAQSALAELGIDFQSDAQHVTIRAVPLPLRQQNLQILIPELIGYLAKQSVFEPGNIAQWIARNLMSEHAQWSMAQAITLLADVERLCPQLVKTPPGGLLQSVDLHPAIKALKDE</sequence>
<protein>
    <recommendedName>
        <fullName evidence="1">DNA mismatch repair protein MutL</fullName>
    </recommendedName>
</protein>
<organism>
    <name type="scientific">Escherichia coli (strain SE11)</name>
    <dbReference type="NCBI Taxonomy" id="409438"/>
    <lineage>
        <taxon>Bacteria</taxon>
        <taxon>Pseudomonadati</taxon>
        <taxon>Pseudomonadota</taxon>
        <taxon>Gammaproteobacteria</taxon>
        <taxon>Enterobacterales</taxon>
        <taxon>Enterobacteriaceae</taxon>
        <taxon>Escherichia</taxon>
    </lineage>
</organism>
<comment type="function">
    <text evidence="1">This protein is involved in the repair of mismatches in DNA. It is required for dam-dependent methyl-directed DNA mismatch repair. May act as a 'molecular matchmaker', a protein that promotes the formation of a stable complex between two or more DNA-binding proteins in an ATP-dependent manner without itself being part of a final effector complex.</text>
</comment>
<comment type="similarity">
    <text evidence="1">Belongs to the DNA mismatch repair MutL/HexB family.</text>
</comment>
<accession>B6I274</accession>
<name>MUTL_ECOSE</name>
<gene>
    <name evidence="1" type="primary">mutL</name>
    <name type="ordered locus">ECSE_4467</name>
</gene>
<feature type="chain" id="PRO_1000096650" description="DNA mismatch repair protein MutL">
    <location>
        <begin position="1"/>
        <end position="615"/>
    </location>
</feature>
<feature type="region of interest" description="Disordered" evidence="2">
    <location>
        <begin position="363"/>
        <end position="397"/>
    </location>
</feature>
<feature type="compositionally biased region" description="Low complexity" evidence="2">
    <location>
        <begin position="364"/>
        <end position="391"/>
    </location>
</feature>
<keyword id="KW-0227">DNA damage</keyword>
<keyword id="KW-0234">DNA repair</keyword>